<organism>
    <name type="scientific">Gallus gallus</name>
    <name type="common">Chicken</name>
    <dbReference type="NCBI Taxonomy" id="9031"/>
    <lineage>
        <taxon>Eukaryota</taxon>
        <taxon>Metazoa</taxon>
        <taxon>Chordata</taxon>
        <taxon>Craniata</taxon>
        <taxon>Vertebrata</taxon>
        <taxon>Euteleostomi</taxon>
        <taxon>Archelosauria</taxon>
        <taxon>Archosauria</taxon>
        <taxon>Dinosauria</taxon>
        <taxon>Saurischia</taxon>
        <taxon>Theropoda</taxon>
        <taxon>Coelurosauria</taxon>
        <taxon>Aves</taxon>
        <taxon>Neognathae</taxon>
        <taxon>Galloanserae</taxon>
        <taxon>Galliformes</taxon>
        <taxon>Phasianidae</taxon>
        <taxon>Phasianinae</taxon>
        <taxon>Gallus</taxon>
    </lineage>
</organism>
<gene>
    <name type="primary">HPSE</name>
    <name type="synonym">HPA</name>
</gene>
<dbReference type="EC" id="3.2.1.166"/>
<dbReference type="EMBL" id="AY037007">
    <property type="protein sequence ID" value="AAK82648.1"/>
    <property type="molecule type" value="mRNA"/>
</dbReference>
<dbReference type="RefSeq" id="NP_989498.1">
    <property type="nucleotide sequence ID" value="NM_204167.1"/>
</dbReference>
<dbReference type="SMR" id="Q90YK5"/>
<dbReference type="FunCoup" id="Q90YK5">
    <property type="interactions" value="67"/>
</dbReference>
<dbReference type="STRING" id="9031.ENSGALP00000018245"/>
<dbReference type="CAZy" id="GH79">
    <property type="family name" value="Glycoside Hydrolase Family 79"/>
</dbReference>
<dbReference type="GlyCosmos" id="Q90YK5">
    <property type="glycosylation" value="4 sites, No reported glycans"/>
</dbReference>
<dbReference type="GlyGen" id="Q90YK5">
    <property type="glycosylation" value="4 sites"/>
</dbReference>
<dbReference type="PaxDb" id="9031-ENSGALP00000018245"/>
<dbReference type="GeneID" id="373981"/>
<dbReference type="KEGG" id="gga:373981"/>
<dbReference type="CTD" id="10855"/>
<dbReference type="VEuPathDB" id="HostDB:geneid_373981"/>
<dbReference type="eggNOG" id="ENOG502QQST">
    <property type="taxonomic scope" value="Eukaryota"/>
</dbReference>
<dbReference type="InParanoid" id="Q90YK5"/>
<dbReference type="OrthoDB" id="726732at2759"/>
<dbReference type="PhylomeDB" id="Q90YK5"/>
<dbReference type="PRO" id="PR:Q90YK5"/>
<dbReference type="Proteomes" id="UP000000539">
    <property type="component" value="Unassembled WGS sequence"/>
</dbReference>
<dbReference type="GO" id="GO:0031012">
    <property type="term" value="C:extracellular matrix"/>
    <property type="evidence" value="ECO:0000318"/>
    <property type="project" value="GO_Central"/>
</dbReference>
<dbReference type="GO" id="GO:0005615">
    <property type="term" value="C:extracellular space"/>
    <property type="evidence" value="ECO:0000318"/>
    <property type="project" value="GO_Central"/>
</dbReference>
<dbReference type="GO" id="GO:0016020">
    <property type="term" value="C:membrane"/>
    <property type="evidence" value="ECO:0007669"/>
    <property type="project" value="InterPro"/>
</dbReference>
<dbReference type="GO" id="GO:0030305">
    <property type="term" value="F:heparanase activity"/>
    <property type="evidence" value="ECO:0000250"/>
    <property type="project" value="UniProtKB"/>
</dbReference>
<dbReference type="GO" id="GO:0060055">
    <property type="term" value="P:angiogenesis involved in wound healing"/>
    <property type="evidence" value="ECO:0000318"/>
    <property type="project" value="GO_Central"/>
</dbReference>
<dbReference type="GO" id="GO:0007160">
    <property type="term" value="P:cell-matrix adhesion"/>
    <property type="evidence" value="ECO:0000314"/>
    <property type="project" value="UniProtKB"/>
</dbReference>
<dbReference type="GO" id="GO:0030200">
    <property type="term" value="P:heparan sulfate proteoglycan catabolic process"/>
    <property type="evidence" value="ECO:0000250"/>
    <property type="project" value="UniProtKB"/>
</dbReference>
<dbReference type="Gene3D" id="3.20.20.80">
    <property type="entry name" value="Glycosidases"/>
    <property type="match status" value="1"/>
</dbReference>
<dbReference type="InterPro" id="IPR005199">
    <property type="entry name" value="Glyco_hydro_79"/>
</dbReference>
<dbReference type="InterPro" id="IPR017853">
    <property type="entry name" value="Glycoside_hydrolase_SF"/>
</dbReference>
<dbReference type="PANTHER" id="PTHR46145">
    <property type="entry name" value="HEPARANASE"/>
    <property type="match status" value="1"/>
</dbReference>
<dbReference type="PANTHER" id="PTHR46145:SF3">
    <property type="entry name" value="HEPARANASE"/>
    <property type="match status" value="1"/>
</dbReference>
<dbReference type="Pfam" id="PF03662">
    <property type="entry name" value="Glyco_hydro_79n"/>
    <property type="match status" value="1"/>
</dbReference>
<dbReference type="SUPFAM" id="SSF51445">
    <property type="entry name" value="(Trans)glycosidases"/>
    <property type="match status" value="1"/>
</dbReference>
<comment type="function">
    <text evidence="1 5">Endoglycosidase that cleaves heparan sulfate proteoglycans (HSPGs) into heparan sulfate side chains and core proteoglycans. Participates in extracellular matrix (ECM) degradation and remodeling. Selectively cleaves the linkage between a glucuronic acid unit and an N-sulfo glucosamine unit carrying either a 3-O-sulfo or a 6-O-sulfo group. Can also cleave the linkage between a glucuronic acid unit and an N-sulfo glucosamine unit carrying a 2-O-sulfo group, but not linkages between a glucuronic acid unit and a 2-O-sulfated iduronic acid moiety (By similarity). Increases cell adhesion to the extracellular matrix (ECM), independent of its enzymatic activity.</text>
</comment>
<comment type="catalytic activity">
    <reaction evidence="4">
        <text>endohydrolysis of (1-&gt;4)-beta-D-glycosidic bonds of heparan sulfate chains in heparan sulfate proteoglycan.</text>
        <dbReference type="EC" id="3.2.1.166"/>
    </reaction>
</comment>
<comment type="subunit">
    <text evidence="4">Heterodimer; the active enzyme is a heterodimer of the 60 kDa and 45 kDa proteolytic products.</text>
</comment>
<comment type="subcellular location">
    <subcellularLocation>
        <location evidence="4">Secreted</location>
    </subcellularLocation>
    <text>Localized close to cell surface.</text>
</comment>
<comment type="developmental stage">
    <text evidence="4">Expressed, as early as 12 hours post fertilization, in cells migrating from the epiblast and forming the hypoblast layer. Later on at 72 h, preferentially expressed in cells of the developing vascular and nervous systems.</text>
</comment>
<comment type="PTM">
    <text evidence="1">N-glycosylated.</text>
</comment>
<comment type="PTM">
    <text>Proteolytically cleaved to produce a 60 kDa and a 45 kDa product.</text>
</comment>
<comment type="similarity">
    <text evidence="6">Belongs to the glycosyl hydrolase 79 family.</text>
</comment>
<accession>Q90YK5</accession>
<evidence type="ECO:0000250" key="1"/>
<evidence type="ECO:0000250" key="2">
    <source>
        <dbReference type="UniProtKB" id="Q9Y251"/>
    </source>
</evidence>
<evidence type="ECO:0000255" key="3"/>
<evidence type="ECO:0000269" key="4">
    <source>
    </source>
</evidence>
<evidence type="ECO:0000269" key="5">
    <source>
    </source>
</evidence>
<evidence type="ECO:0000305" key="6"/>
<protein>
    <recommendedName>
        <fullName>Heparanase</fullName>
        <ecNumber>3.2.1.166</ecNumber>
    </recommendedName>
</protein>
<sequence length="523" mass="58386">MLVLLLLVLLLAVPPRRTAELQLGLREPIGAVSPAFLSLTLDASLARDPRFVALLRHPKLHTLASGLSPGFLRFGGTSTDFLIFNPNKDSTWEEKVLSEFQAKDVCEAWPSFAVVPKLLLTQWPLQEKLLLAEHSWKKHKNTTITRSTLDILHTFASSSGFRLVFGLNALLRRAGLQWDSSNAKQLLGYCAQRSYNISWELGNEPNSFRKKSGICIDGFQLGRDFVHLRQLLSQHPLYRHAELYGLDVGQPRKHTQHLLRSFMKSGGKAIDSVTWHHYYVNGRSATREDFLSPEVLDSFATAIHDVLGIVEATVPGKKVWLGETGSAYGGGAPQLSNTYVAGFMWLDKLGLAARRGIDVVMRQVSFGAGSYHLVDAGFKPLPDYWLSLLYKRLVGTRVLQASVEQADARRPRVYLHCTNPRHPKYREGDVTLFALNLSNVTQSLQLPKQLWSKSVDQYLLLPHGKDSILSREVQLNGRLLQMVDDETLPALHEMALAPGSTLGLPAFSYGFYVIRNAKAIACI</sequence>
<name>HPSE_CHICK</name>
<reference key="1">
    <citation type="journal article" date="2001" name="J. Biol. Chem.">
        <title>Expression pattern and secretion of human and chicken heparanase are determined by their signal peptide sequence.</title>
        <authorList>
            <person name="Goldshmidt O."/>
            <person name="Zcharia E."/>
            <person name="Aingorn H."/>
            <person name="Guatta-Rangini Z."/>
            <person name="Atzmon R."/>
            <person name="Michal I."/>
            <person name="Pecker I."/>
            <person name="Mitrani E."/>
            <person name="Vlodavsky I."/>
        </authorList>
    </citation>
    <scope>NUCLEOTIDE SEQUENCE [MRNA]</scope>
    <scope>SUBCELLULAR LOCATION</scope>
    <scope>SUBUNIT</scope>
    <scope>ENZYME ACTIVITY</scope>
    <scope>DEVELOPMENTAL STAGE</scope>
</reference>
<reference key="2">
    <citation type="journal article" date="2003" name="FASEB J.">
        <title>Heparanase mediates cell adhesion independent of its enzymatic activity.</title>
        <authorList>
            <person name="Goldshmidt O."/>
            <person name="Zcharia E."/>
            <person name="Cohen M."/>
            <person name="Aingorn H."/>
            <person name="Cohen I."/>
            <person name="Nadav L."/>
            <person name="Katz B.Z."/>
            <person name="Geiger B."/>
            <person name="Vlodavsky I."/>
        </authorList>
    </citation>
    <scope>FUNCTION</scope>
</reference>
<keyword id="KW-0130">Cell adhesion</keyword>
<keyword id="KW-1015">Disulfide bond</keyword>
<keyword id="KW-0325">Glycoprotein</keyword>
<keyword id="KW-0378">Hydrolase</keyword>
<keyword id="KW-1185">Reference proteome</keyword>
<keyword id="KW-0964">Secreted</keyword>
<keyword id="KW-0732">Signal</keyword>
<proteinExistence type="evidence at protein level"/>
<feature type="signal peptide" evidence="3">
    <location>
        <begin position="1"/>
        <end position="18"/>
    </location>
</feature>
<feature type="chain" id="PRO_0000042259" description="Heparanase">
    <location>
        <begin position="19"/>
        <end position="523"/>
    </location>
</feature>
<feature type="region of interest" description="Required for heterodimerization with the heparanase 8 kDa subunit" evidence="2">
    <location>
        <begin position="268"/>
        <end position="397"/>
    </location>
</feature>
<feature type="region of interest" description="Required for transferring proheparanase to the Golgi apparatus, secretion and subsequent enzyme activity and for enhancement of PKB/AKT1 phosphorylation" evidence="2">
    <location>
        <begin position="507"/>
        <end position="523"/>
    </location>
</feature>
<feature type="active site" description="Proton donor" evidence="2">
    <location>
        <position position="204"/>
    </location>
</feature>
<feature type="active site" description="Nucleophile" evidence="2">
    <location>
        <position position="323"/>
    </location>
</feature>
<feature type="binding site" evidence="2">
    <location>
        <begin position="42"/>
        <end position="44"/>
    </location>
    <ligand>
        <name>heparan sulfate group</name>
        <dbReference type="ChEBI" id="CHEBI:157750"/>
    </ligand>
</feature>
<feature type="binding site" evidence="2">
    <location>
        <position position="77"/>
    </location>
    <ligand>
        <name>heparan sulfate group</name>
        <dbReference type="ChEBI" id="CHEBI:157750"/>
    </ligand>
</feature>
<feature type="binding site" evidence="2">
    <location>
        <begin position="137"/>
        <end position="141"/>
    </location>
    <ligand>
        <name>heparan sulfate group</name>
        <dbReference type="ChEBI" id="CHEBI:157750"/>
    </ligand>
</feature>
<feature type="binding site" evidence="2">
    <location>
        <begin position="250"/>
        <end position="260"/>
    </location>
    <ligand>
        <name>heparan sulfate group</name>
        <dbReference type="ChEBI" id="CHEBI:157750"/>
    </ligand>
</feature>
<feature type="binding site" evidence="2">
    <location>
        <position position="276"/>
    </location>
    <ligand>
        <name>heparan sulfate group</name>
        <dbReference type="ChEBI" id="CHEBI:157750"/>
    </ligand>
</feature>
<feature type="binding site" evidence="2">
    <location>
        <position position="283"/>
    </location>
    <ligand>
        <name>heparan sulfate group</name>
        <dbReference type="ChEBI" id="CHEBI:157750"/>
    </ligand>
</feature>
<feature type="binding site" evidence="2">
    <location>
        <begin position="328"/>
        <end position="330"/>
    </location>
    <ligand>
        <name>heparan sulfate group</name>
        <dbReference type="ChEBI" id="CHEBI:157750"/>
    </ligand>
</feature>
<feature type="binding site" evidence="2">
    <location>
        <begin position="369"/>
        <end position="371"/>
    </location>
    <ligand>
        <name>heparan sulfate group</name>
        <dbReference type="ChEBI" id="CHEBI:157750"/>
    </ligand>
</feature>
<feature type="glycosylation site" description="N-linked (GlcNAc...) asparagine" evidence="2">
    <location>
        <position position="141"/>
    </location>
</feature>
<feature type="glycosylation site" description="N-linked (GlcNAc...) asparagine" evidence="2">
    <location>
        <position position="196"/>
    </location>
</feature>
<feature type="glycosylation site" description="N-linked (GlcNAc...) asparagine" evidence="3">
    <location>
        <position position="436"/>
    </location>
</feature>
<feature type="glycosylation site" description="N-linked (GlcNAc...) asparagine" evidence="2">
    <location>
        <position position="439"/>
    </location>
</feature>
<feature type="disulfide bond" evidence="2">
    <location>
        <begin position="417"/>
        <end position="522"/>
    </location>
</feature>